<protein>
    <recommendedName>
        <fullName evidence="1">Large ribosomal subunit protein bL36</fullName>
    </recommendedName>
    <alternativeName>
        <fullName evidence="2">50S ribosomal protein L36</fullName>
    </alternativeName>
</protein>
<name>RL36_RHILO</name>
<reference key="1">
    <citation type="journal article" date="2000" name="DNA Res.">
        <title>Complete genome structure of the nitrogen-fixing symbiotic bacterium Mesorhizobium loti.</title>
        <authorList>
            <person name="Kaneko T."/>
            <person name="Nakamura Y."/>
            <person name="Sato S."/>
            <person name="Asamizu E."/>
            <person name="Kato T."/>
            <person name="Sasamoto S."/>
            <person name="Watanabe A."/>
            <person name="Idesawa K."/>
            <person name="Ishikawa A."/>
            <person name="Kawashima K."/>
            <person name="Kimura T."/>
            <person name="Kishida Y."/>
            <person name="Kiyokawa C."/>
            <person name="Kohara M."/>
            <person name="Matsumoto M."/>
            <person name="Matsuno A."/>
            <person name="Mochizuki Y."/>
            <person name="Nakayama S."/>
            <person name="Nakazaki N."/>
            <person name="Shimpo S."/>
            <person name="Sugimoto M."/>
            <person name="Takeuchi C."/>
            <person name="Yamada M."/>
            <person name="Tabata S."/>
        </authorList>
    </citation>
    <scope>NUCLEOTIDE SEQUENCE [LARGE SCALE GENOMIC DNA]</scope>
    <source>
        <strain>LMG 29417 / CECT 9101 / MAFF 303099</strain>
    </source>
</reference>
<proteinExistence type="inferred from homology"/>
<keyword id="KW-0687">Ribonucleoprotein</keyword>
<keyword id="KW-0689">Ribosomal protein</keyword>
<organism>
    <name type="scientific">Mesorhizobium japonicum (strain LMG 29417 / CECT 9101 / MAFF 303099)</name>
    <name type="common">Mesorhizobium loti (strain MAFF 303099)</name>
    <dbReference type="NCBI Taxonomy" id="266835"/>
    <lineage>
        <taxon>Bacteria</taxon>
        <taxon>Pseudomonadati</taxon>
        <taxon>Pseudomonadota</taxon>
        <taxon>Alphaproteobacteria</taxon>
        <taxon>Hyphomicrobiales</taxon>
        <taxon>Phyllobacteriaceae</taxon>
        <taxon>Mesorhizobium</taxon>
    </lineage>
</organism>
<comment type="similarity">
    <text evidence="1">Belongs to the bacterial ribosomal protein bL36 family.</text>
</comment>
<gene>
    <name evidence="1" type="primary">rpmJ</name>
    <name type="ordered locus">msr3814</name>
</gene>
<evidence type="ECO:0000255" key="1">
    <source>
        <dbReference type="HAMAP-Rule" id="MF_00251"/>
    </source>
</evidence>
<evidence type="ECO:0000305" key="2"/>
<sequence length="41" mass="4878">MKIKNSLKALKARHRDNQLVRRKGRVYIINKTAPRYKARQG</sequence>
<dbReference type="EMBL" id="BA000012">
    <property type="protein sequence ID" value="BAB50624.1"/>
    <property type="molecule type" value="Genomic_DNA"/>
</dbReference>
<dbReference type="SMR" id="Q98FE3"/>
<dbReference type="KEGG" id="mlo:msr3814"/>
<dbReference type="eggNOG" id="COG0257">
    <property type="taxonomic scope" value="Bacteria"/>
</dbReference>
<dbReference type="HOGENOM" id="CLU_135723_3_2_5"/>
<dbReference type="Proteomes" id="UP000000552">
    <property type="component" value="Chromosome"/>
</dbReference>
<dbReference type="GO" id="GO:1990904">
    <property type="term" value="C:ribonucleoprotein complex"/>
    <property type="evidence" value="ECO:0007669"/>
    <property type="project" value="UniProtKB-KW"/>
</dbReference>
<dbReference type="GO" id="GO:0005840">
    <property type="term" value="C:ribosome"/>
    <property type="evidence" value="ECO:0007669"/>
    <property type="project" value="UniProtKB-KW"/>
</dbReference>
<dbReference type="GO" id="GO:0003735">
    <property type="term" value="F:structural constituent of ribosome"/>
    <property type="evidence" value="ECO:0007669"/>
    <property type="project" value="InterPro"/>
</dbReference>
<dbReference type="GO" id="GO:0006412">
    <property type="term" value="P:translation"/>
    <property type="evidence" value="ECO:0007669"/>
    <property type="project" value="UniProtKB-UniRule"/>
</dbReference>
<dbReference type="HAMAP" id="MF_00251">
    <property type="entry name" value="Ribosomal_bL36"/>
    <property type="match status" value="1"/>
</dbReference>
<dbReference type="InterPro" id="IPR000473">
    <property type="entry name" value="Ribosomal_bL36"/>
</dbReference>
<dbReference type="InterPro" id="IPR035977">
    <property type="entry name" value="Ribosomal_bL36_sp"/>
</dbReference>
<dbReference type="InterPro" id="IPR047621">
    <property type="entry name" value="Ribosomal_L36_bact"/>
</dbReference>
<dbReference type="NCBIfam" id="NF002021">
    <property type="entry name" value="PRK00831.1"/>
    <property type="match status" value="1"/>
</dbReference>
<dbReference type="NCBIfam" id="TIGR01022">
    <property type="entry name" value="rpmJ_bact"/>
    <property type="match status" value="1"/>
</dbReference>
<dbReference type="PANTHER" id="PTHR47781">
    <property type="entry name" value="50S RIBOSOMAL PROTEIN L36 2"/>
    <property type="match status" value="1"/>
</dbReference>
<dbReference type="PANTHER" id="PTHR47781:SF1">
    <property type="entry name" value="LARGE RIBOSOMAL SUBUNIT PROTEIN BL36B"/>
    <property type="match status" value="1"/>
</dbReference>
<dbReference type="Pfam" id="PF00444">
    <property type="entry name" value="Ribosomal_L36"/>
    <property type="match status" value="1"/>
</dbReference>
<dbReference type="SUPFAM" id="SSF57840">
    <property type="entry name" value="Ribosomal protein L36"/>
    <property type="match status" value="1"/>
</dbReference>
<feature type="chain" id="PRO_0000126244" description="Large ribosomal subunit protein bL36">
    <location>
        <begin position="1"/>
        <end position="41"/>
    </location>
</feature>
<accession>Q98FE3</accession>